<feature type="chain" id="PRO_1000025810" description="Chaperonin GroEL">
    <location>
        <begin position="1"/>
        <end position="547"/>
    </location>
</feature>
<feature type="region of interest" description="Disordered" evidence="2">
    <location>
        <begin position="525"/>
        <end position="547"/>
    </location>
</feature>
<feature type="compositionally biased region" description="Gly residues" evidence="2">
    <location>
        <begin position="532"/>
        <end position="547"/>
    </location>
</feature>
<feature type="binding site" evidence="1">
    <location>
        <begin position="30"/>
        <end position="33"/>
    </location>
    <ligand>
        <name>ATP</name>
        <dbReference type="ChEBI" id="CHEBI:30616"/>
    </ligand>
</feature>
<feature type="binding site" evidence="1">
    <location>
        <position position="51"/>
    </location>
    <ligand>
        <name>ATP</name>
        <dbReference type="ChEBI" id="CHEBI:30616"/>
    </ligand>
</feature>
<feature type="binding site" evidence="1">
    <location>
        <begin position="87"/>
        <end position="91"/>
    </location>
    <ligand>
        <name>ATP</name>
        <dbReference type="ChEBI" id="CHEBI:30616"/>
    </ligand>
</feature>
<feature type="binding site" evidence="1">
    <location>
        <position position="415"/>
    </location>
    <ligand>
        <name>ATP</name>
        <dbReference type="ChEBI" id="CHEBI:30616"/>
    </ligand>
</feature>
<feature type="binding site" evidence="1">
    <location>
        <begin position="479"/>
        <end position="481"/>
    </location>
    <ligand>
        <name>ATP</name>
        <dbReference type="ChEBI" id="CHEBI:30616"/>
    </ligand>
</feature>
<feature type="binding site" evidence="1">
    <location>
        <position position="495"/>
    </location>
    <ligand>
        <name>ATP</name>
        <dbReference type="ChEBI" id="CHEBI:30616"/>
    </ligand>
</feature>
<name>CH60_NITEC</name>
<dbReference type="EC" id="5.6.1.7" evidence="1"/>
<dbReference type="EMBL" id="CP000450">
    <property type="protein sequence ID" value="ABI58492.1"/>
    <property type="molecule type" value="Genomic_DNA"/>
</dbReference>
<dbReference type="RefSeq" id="WP_011633337.1">
    <property type="nucleotide sequence ID" value="NC_008344.1"/>
</dbReference>
<dbReference type="SMR" id="Q0AJH9"/>
<dbReference type="STRING" id="335283.Neut_0206"/>
<dbReference type="KEGG" id="net:Neut_0206"/>
<dbReference type="eggNOG" id="COG0459">
    <property type="taxonomic scope" value="Bacteria"/>
</dbReference>
<dbReference type="HOGENOM" id="CLU_016503_3_0_4"/>
<dbReference type="OrthoDB" id="9766614at2"/>
<dbReference type="Proteomes" id="UP000001966">
    <property type="component" value="Chromosome"/>
</dbReference>
<dbReference type="GO" id="GO:0005737">
    <property type="term" value="C:cytoplasm"/>
    <property type="evidence" value="ECO:0007669"/>
    <property type="project" value="UniProtKB-SubCell"/>
</dbReference>
<dbReference type="GO" id="GO:0005524">
    <property type="term" value="F:ATP binding"/>
    <property type="evidence" value="ECO:0007669"/>
    <property type="project" value="UniProtKB-UniRule"/>
</dbReference>
<dbReference type="GO" id="GO:0140662">
    <property type="term" value="F:ATP-dependent protein folding chaperone"/>
    <property type="evidence" value="ECO:0007669"/>
    <property type="project" value="InterPro"/>
</dbReference>
<dbReference type="GO" id="GO:0016853">
    <property type="term" value="F:isomerase activity"/>
    <property type="evidence" value="ECO:0007669"/>
    <property type="project" value="UniProtKB-KW"/>
</dbReference>
<dbReference type="GO" id="GO:0051082">
    <property type="term" value="F:unfolded protein binding"/>
    <property type="evidence" value="ECO:0007669"/>
    <property type="project" value="UniProtKB-UniRule"/>
</dbReference>
<dbReference type="GO" id="GO:0042026">
    <property type="term" value="P:protein refolding"/>
    <property type="evidence" value="ECO:0007669"/>
    <property type="project" value="UniProtKB-UniRule"/>
</dbReference>
<dbReference type="CDD" id="cd03344">
    <property type="entry name" value="GroEL"/>
    <property type="match status" value="1"/>
</dbReference>
<dbReference type="FunFam" id="1.10.560.10:FF:000001">
    <property type="entry name" value="60 kDa chaperonin"/>
    <property type="match status" value="1"/>
</dbReference>
<dbReference type="FunFam" id="3.50.7.10:FF:000001">
    <property type="entry name" value="60 kDa chaperonin"/>
    <property type="match status" value="1"/>
</dbReference>
<dbReference type="Gene3D" id="3.50.7.10">
    <property type="entry name" value="GroEL"/>
    <property type="match status" value="1"/>
</dbReference>
<dbReference type="Gene3D" id="1.10.560.10">
    <property type="entry name" value="GroEL-like equatorial domain"/>
    <property type="match status" value="1"/>
</dbReference>
<dbReference type="Gene3D" id="3.30.260.10">
    <property type="entry name" value="TCP-1-like chaperonin intermediate domain"/>
    <property type="match status" value="1"/>
</dbReference>
<dbReference type="HAMAP" id="MF_00600">
    <property type="entry name" value="CH60"/>
    <property type="match status" value="1"/>
</dbReference>
<dbReference type="InterPro" id="IPR018370">
    <property type="entry name" value="Chaperonin_Cpn60_CS"/>
</dbReference>
<dbReference type="InterPro" id="IPR001844">
    <property type="entry name" value="Cpn60/GroEL"/>
</dbReference>
<dbReference type="InterPro" id="IPR002423">
    <property type="entry name" value="Cpn60/GroEL/TCP-1"/>
</dbReference>
<dbReference type="InterPro" id="IPR027409">
    <property type="entry name" value="GroEL-like_apical_dom_sf"/>
</dbReference>
<dbReference type="InterPro" id="IPR027413">
    <property type="entry name" value="GROEL-like_equatorial_sf"/>
</dbReference>
<dbReference type="InterPro" id="IPR027410">
    <property type="entry name" value="TCP-1-like_intermed_sf"/>
</dbReference>
<dbReference type="NCBIfam" id="TIGR02348">
    <property type="entry name" value="GroEL"/>
    <property type="match status" value="1"/>
</dbReference>
<dbReference type="NCBIfam" id="NF000592">
    <property type="entry name" value="PRK00013.1"/>
    <property type="match status" value="1"/>
</dbReference>
<dbReference type="NCBIfam" id="NF009487">
    <property type="entry name" value="PRK12849.1"/>
    <property type="match status" value="1"/>
</dbReference>
<dbReference type="NCBIfam" id="NF009488">
    <property type="entry name" value="PRK12850.1"/>
    <property type="match status" value="1"/>
</dbReference>
<dbReference type="NCBIfam" id="NF009489">
    <property type="entry name" value="PRK12851.1"/>
    <property type="match status" value="1"/>
</dbReference>
<dbReference type="PANTHER" id="PTHR45633">
    <property type="entry name" value="60 KDA HEAT SHOCK PROTEIN, MITOCHONDRIAL"/>
    <property type="match status" value="1"/>
</dbReference>
<dbReference type="Pfam" id="PF00118">
    <property type="entry name" value="Cpn60_TCP1"/>
    <property type="match status" value="1"/>
</dbReference>
<dbReference type="PRINTS" id="PR00298">
    <property type="entry name" value="CHAPERONIN60"/>
</dbReference>
<dbReference type="SUPFAM" id="SSF52029">
    <property type="entry name" value="GroEL apical domain-like"/>
    <property type="match status" value="1"/>
</dbReference>
<dbReference type="SUPFAM" id="SSF48592">
    <property type="entry name" value="GroEL equatorial domain-like"/>
    <property type="match status" value="1"/>
</dbReference>
<dbReference type="SUPFAM" id="SSF54849">
    <property type="entry name" value="GroEL-intermediate domain like"/>
    <property type="match status" value="1"/>
</dbReference>
<dbReference type="PROSITE" id="PS00296">
    <property type="entry name" value="CHAPERONINS_CPN60"/>
    <property type="match status" value="1"/>
</dbReference>
<accession>Q0AJH9</accession>
<protein>
    <recommendedName>
        <fullName evidence="1">Chaperonin GroEL</fullName>
        <ecNumber evidence="1">5.6.1.7</ecNumber>
    </recommendedName>
    <alternativeName>
        <fullName evidence="1">60 kDa chaperonin</fullName>
    </alternativeName>
    <alternativeName>
        <fullName evidence="1">Chaperonin-60</fullName>
        <shortName evidence="1">Cpn60</shortName>
    </alternativeName>
</protein>
<keyword id="KW-0067">ATP-binding</keyword>
<keyword id="KW-0143">Chaperone</keyword>
<keyword id="KW-0963">Cytoplasm</keyword>
<keyword id="KW-0413">Isomerase</keyword>
<keyword id="KW-0547">Nucleotide-binding</keyword>
<organism>
    <name type="scientific">Nitrosomonas eutropha (strain DSM 101675 / C91 / Nm57)</name>
    <dbReference type="NCBI Taxonomy" id="335283"/>
    <lineage>
        <taxon>Bacteria</taxon>
        <taxon>Pseudomonadati</taxon>
        <taxon>Pseudomonadota</taxon>
        <taxon>Betaproteobacteria</taxon>
        <taxon>Nitrosomonadales</taxon>
        <taxon>Nitrosomonadaceae</taxon>
        <taxon>Nitrosomonas</taxon>
    </lineage>
</organism>
<comment type="function">
    <text evidence="1">Together with its co-chaperonin GroES, plays an essential role in assisting protein folding. The GroEL-GroES system forms a nano-cage that allows encapsulation of the non-native substrate proteins and provides a physical environment optimized to promote and accelerate protein folding.</text>
</comment>
<comment type="catalytic activity">
    <reaction evidence="1">
        <text>ATP + H2O + a folded polypeptide = ADP + phosphate + an unfolded polypeptide.</text>
        <dbReference type="EC" id="5.6.1.7"/>
    </reaction>
</comment>
<comment type="subunit">
    <text evidence="1">Forms a cylinder of 14 subunits composed of two heptameric rings stacked back-to-back. Interacts with the co-chaperonin GroES.</text>
</comment>
<comment type="subcellular location">
    <subcellularLocation>
        <location evidence="1">Cytoplasm</location>
    </subcellularLocation>
</comment>
<comment type="similarity">
    <text evidence="1">Belongs to the chaperonin (HSP60) family.</text>
</comment>
<gene>
    <name evidence="1" type="primary">groEL</name>
    <name evidence="1" type="synonym">groL</name>
    <name type="ordered locus">Neut_0206</name>
</gene>
<reference key="1">
    <citation type="journal article" date="2007" name="Environ. Microbiol.">
        <title>Whole-genome analysis of the ammonia-oxidizing bacterium, Nitrosomonas eutropha C91: implications for niche adaptation.</title>
        <authorList>
            <person name="Stein L.Y."/>
            <person name="Arp D.J."/>
            <person name="Berube P.M."/>
            <person name="Chain P.S."/>
            <person name="Hauser L."/>
            <person name="Jetten M.S."/>
            <person name="Klotz M.G."/>
            <person name="Larimer F.W."/>
            <person name="Norton J.M."/>
            <person name="Op den Camp H.J.M."/>
            <person name="Shin M."/>
            <person name="Wei X."/>
        </authorList>
    </citation>
    <scope>NUCLEOTIDE SEQUENCE [LARGE SCALE GENOMIC DNA]</scope>
    <source>
        <strain>DSM 101675 / C91 / Nm57</strain>
    </source>
</reference>
<proteinExistence type="inferred from homology"/>
<sequence length="547" mass="57462">MAAKEVRFGDAARSAVITGVNVLADAVKVTLGPKGRNVVLERSYGAPTITKDGVSVAKEIELKDKFENMGAQMVKEVASKTSDTAGDGTTTATVLAQAIVKEGMRYVAAGMNPMDLKRGIEKAVSAAVEELKKLSKPCSTSKEIAQVGSISANSDAEIGRIIAEAMDKVGKEGVITVEDGSGLENELDVVEGMQFDRGYLSPYFVSSAEKQIAALENPFILLHDKKISNIRDLLPILEQVAKAGKPLLIIAEDVDGEALATLVVNNIRGILKTCAVKAPGFGDRRKAMLEDIAILTGGTVIAEEVGLSLEKAKLEDLGQAKRVEVGKENTTIIDGAGDTKAIEARVTQIRKQIEEATSDYDREKLQERVAKLAGGVALIKVGAATEMEMKEKKARVEDAFHATRAAVEEGIVPGGGVALLRTIDAVSKAKGDNHDQDSGIKIVLRALEEPLRQIVTNCGDEASVVVNKVKEGKGNFGYNAATGEYGDLVAMGVLDPTKVTRSALQNASSVAGLILTTDAMVAELPKEDSPGAGAGMGGMGGMGGMDM</sequence>
<evidence type="ECO:0000255" key="1">
    <source>
        <dbReference type="HAMAP-Rule" id="MF_00600"/>
    </source>
</evidence>
<evidence type="ECO:0000256" key="2">
    <source>
        <dbReference type="SAM" id="MobiDB-lite"/>
    </source>
</evidence>